<keyword id="KW-0028">Amino-acid biosynthesis</keyword>
<keyword id="KW-0032">Aminotransferase</keyword>
<keyword id="KW-0368">Histidine biosynthesis</keyword>
<keyword id="KW-0663">Pyridoxal phosphate</keyword>
<keyword id="KW-0808">Transferase</keyword>
<evidence type="ECO:0000255" key="1">
    <source>
        <dbReference type="HAMAP-Rule" id="MF_01023"/>
    </source>
</evidence>
<feature type="chain" id="PRO_0000153476" description="Histidinol-phosphate aminotransferase">
    <location>
        <begin position="1"/>
        <end position="346"/>
    </location>
</feature>
<feature type="modified residue" description="N6-(pyridoxal phosphate)lysine" evidence="1">
    <location>
        <position position="209"/>
    </location>
</feature>
<protein>
    <recommendedName>
        <fullName evidence="1">Histidinol-phosphate aminotransferase</fullName>
        <ecNumber evidence="1">2.6.1.9</ecNumber>
    </recommendedName>
    <alternativeName>
        <fullName evidence="1">Imidazole acetol-phosphate transaminase</fullName>
    </alternativeName>
</protein>
<dbReference type="EC" id="2.6.1.9" evidence="1"/>
<dbReference type="EMBL" id="BA000031">
    <property type="protein sequence ID" value="BAC59402.1"/>
    <property type="molecule type" value="Genomic_DNA"/>
</dbReference>
<dbReference type="RefSeq" id="NP_797518.1">
    <property type="nucleotide sequence ID" value="NC_004603.1"/>
</dbReference>
<dbReference type="RefSeq" id="WP_005480420.1">
    <property type="nucleotide sequence ID" value="NC_004603.1"/>
</dbReference>
<dbReference type="SMR" id="Q87QL0"/>
<dbReference type="GeneID" id="1188644"/>
<dbReference type="KEGG" id="vpa:VP1139"/>
<dbReference type="PATRIC" id="fig|223926.6.peg.1081"/>
<dbReference type="eggNOG" id="COG0079">
    <property type="taxonomic scope" value="Bacteria"/>
</dbReference>
<dbReference type="HOGENOM" id="CLU_017584_3_1_6"/>
<dbReference type="UniPathway" id="UPA00031">
    <property type="reaction ID" value="UER00012"/>
</dbReference>
<dbReference type="Proteomes" id="UP000002493">
    <property type="component" value="Chromosome 1"/>
</dbReference>
<dbReference type="GO" id="GO:0004400">
    <property type="term" value="F:histidinol-phosphate transaminase activity"/>
    <property type="evidence" value="ECO:0007669"/>
    <property type="project" value="UniProtKB-UniRule"/>
</dbReference>
<dbReference type="GO" id="GO:0030170">
    <property type="term" value="F:pyridoxal phosphate binding"/>
    <property type="evidence" value="ECO:0007669"/>
    <property type="project" value="InterPro"/>
</dbReference>
<dbReference type="GO" id="GO:0000105">
    <property type="term" value="P:L-histidine biosynthetic process"/>
    <property type="evidence" value="ECO:0007669"/>
    <property type="project" value="UniProtKB-UniRule"/>
</dbReference>
<dbReference type="CDD" id="cd00609">
    <property type="entry name" value="AAT_like"/>
    <property type="match status" value="1"/>
</dbReference>
<dbReference type="FunFam" id="3.40.640.10:FF:000032">
    <property type="entry name" value="Histidinol-phosphate aminotransferase"/>
    <property type="match status" value="1"/>
</dbReference>
<dbReference type="Gene3D" id="3.90.1150.10">
    <property type="entry name" value="Aspartate Aminotransferase, domain 1"/>
    <property type="match status" value="1"/>
</dbReference>
<dbReference type="Gene3D" id="3.40.640.10">
    <property type="entry name" value="Type I PLP-dependent aspartate aminotransferase-like (Major domain)"/>
    <property type="match status" value="1"/>
</dbReference>
<dbReference type="HAMAP" id="MF_01023">
    <property type="entry name" value="HisC_aminotrans_2"/>
    <property type="match status" value="1"/>
</dbReference>
<dbReference type="InterPro" id="IPR001917">
    <property type="entry name" value="Aminotrans_II_pyridoxalP_BS"/>
</dbReference>
<dbReference type="InterPro" id="IPR004839">
    <property type="entry name" value="Aminotransferase_I/II_large"/>
</dbReference>
<dbReference type="InterPro" id="IPR005861">
    <property type="entry name" value="HisP_aminotrans"/>
</dbReference>
<dbReference type="InterPro" id="IPR015424">
    <property type="entry name" value="PyrdxlP-dep_Trfase"/>
</dbReference>
<dbReference type="InterPro" id="IPR015421">
    <property type="entry name" value="PyrdxlP-dep_Trfase_major"/>
</dbReference>
<dbReference type="InterPro" id="IPR015422">
    <property type="entry name" value="PyrdxlP-dep_Trfase_small"/>
</dbReference>
<dbReference type="NCBIfam" id="TIGR01141">
    <property type="entry name" value="hisC"/>
    <property type="match status" value="1"/>
</dbReference>
<dbReference type="PANTHER" id="PTHR42885:SF2">
    <property type="entry name" value="HISTIDINOL-PHOSPHATE AMINOTRANSFERASE"/>
    <property type="match status" value="1"/>
</dbReference>
<dbReference type="PANTHER" id="PTHR42885">
    <property type="entry name" value="HISTIDINOL-PHOSPHATE AMINOTRANSFERASE-RELATED"/>
    <property type="match status" value="1"/>
</dbReference>
<dbReference type="Pfam" id="PF00155">
    <property type="entry name" value="Aminotran_1_2"/>
    <property type="match status" value="1"/>
</dbReference>
<dbReference type="SUPFAM" id="SSF53383">
    <property type="entry name" value="PLP-dependent transferases"/>
    <property type="match status" value="1"/>
</dbReference>
<dbReference type="PROSITE" id="PS00599">
    <property type="entry name" value="AA_TRANSFER_CLASS_2"/>
    <property type="match status" value="1"/>
</dbReference>
<accession>Q87QL0</accession>
<name>HIS8_VIBPA</name>
<gene>
    <name evidence="1" type="primary">hisC</name>
    <name type="ordered locus">VP1139</name>
</gene>
<reference key="1">
    <citation type="journal article" date="2003" name="Lancet">
        <title>Genome sequence of Vibrio parahaemolyticus: a pathogenic mechanism distinct from that of V. cholerae.</title>
        <authorList>
            <person name="Makino K."/>
            <person name="Oshima K."/>
            <person name="Kurokawa K."/>
            <person name="Yokoyama K."/>
            <person name="Uda T."/>
            <person name="Tagomori K."/>
            <person name="Iijima Y."/>
            <person name="Najima M."/>
            <person name="Nakano M."/>
            <person name="Yamashita A."/>
            <person name="Kubota Y."/>
            <person name="Kimura S."/>
            <person name="Yasunaga T."/>
            <person name="Honda T."/>
            <person name="Shinagawa H."/>
            <person name="Hattori M."/>
            <person name="Iida T."/>
        </authorList>
    </citation>
    <scope>NUCLEOTIDE SEQUENCE [LARGE SCALE GENOMIC DNA]</scope>
    <source>
        <strain>RIMD 2210633</strain>
    </source>
</reference>
<organism>
    <name type="scientific">Vibrio parahaemolyticus serotype O3:K6 (strain RIMD 2210633)</name>
    <dbReference type="NCBI Taxonomy" id="223926"/>
    <lineage>
        <taxon>Bacteria</taxon>
        <taxon>Pseudomonadati</taxon>
        <taxon>Pseudomonadota</taxon>
        <taxon>Gammaproteobacteria</taxon>
        <taxon>Vibrionales</taxon>
        <taxon>Vibrionaceae</taxon>
        <taxon>Vibrio</taxon>
    </lineage>
</organism>
<sequence>MEKLARKQVQELTPYLSARRIGGTGDVWLNANESPFNNEYKTDFARLNRYSECQPKALISAYAAYAGVKPEQTLTSRGADEGIELLVRAFCEPGQDAILYCPPTYGMYAISAETIGVERKTVPLTSDWQLDLAGIESNLDNVKLVFVCSPNNPTGNLVKREDIVSLLEMTKDRAIVVMDEAYIDFCPEASTVDLLAQYPNLAILRTLSKAFALAGLRCGFTLANEELINVLLKVIAPYPVPVPVAEIAVQALSEAGLARAKFQVLDLNANRAYLQVGLSMIPGLQVFEGWGNYLLVKFPDGDALFKAAWDTGIILRNSPIENCVRISVGNRDECEKTLGFIRNYYS</sequence>
<comment type="catalytic activity">
    <reaction evidence="1">
        <text>L-histidinol phosphate + 2-oxoglutarate = 3-(imidazol-4-yl)-2-oxopropyl phosphate + L-glutamate</text>
        <dbReference type="Rhea" id="RHEA:23744"/>
        <dbReference type="ChEBI" id="CHEBI:16810"/>
        <dbReference type="ChEBI" id="CHEBI:29985"/>
        <dbReference type="ChEBI" id="CHEBI:57766"/>
        <dbReference type="ChEBI" id="CHEBI:57980"/>
        <dbReference type="EC" id="2.6.1.9"/>
    </reaction>
</comment>
<comment type="cofactor">
    <cofactor evidence="1">
        <name>pyridoxal 5'-phosphate</name>
        <dbReference type="ChEBI" id="CHEBI:597326"/>
    </cofactor>
</comment>
<comment type="pathway">
    <text evidence="1">Amino-acid biosynthesis; L-histidine biosynthesis; L-histidine from 5-phospho-alpha-D-ribose 1-diphosphate: step 7/9.</text>
</comment>
<comment type="subunit">
    <text evidence="1">Homodimer.</text>
</comment>
<comment type="similarity">
    <text evidence="1">Belongs to the class-II pyridoxal-phosphate-dependent aminotransferase family. Histidinol-phosphate aminotransferase subfamily.</text>
</comment>
<proteinExistence type="inferred from homology"/>